<accession>A4J2F4</accession>
<protein>
    <recommendedName>
        <fullName evidence="1">Isoleucine--tRNA ligase</fullName>
        <ecNumber evidence="1">6.1.1.5</ecNumber>
    </recommendedName>
    <alternativeName>
        <fullName evidence="1">Isoleucyl-tRNA synthetase</fullName>
        <shortName evidence="1">IleRS</shortName>
    </alternativeName>
</protein>
<gene>
    <name evidence="1" type="primary">ileS</name>
    <name type="ordered locus">Dred_0718</name>
</gene>
<dbReference type="EC" id="6.1.1.5" evidence="1"/>
<dbReference type="EMBL" id="CP000612">
    <property type="protein sequence ID" value="ABO49257.1"/>
    <property type="molecule type" value="Genomic_DNA"/>
</dbReference>
<dbReference type="RefSeq" id="WP_011877093.1">
    <property type="nucleotide sequence ID" value="NC_009253.1"/>
</dbReference>
<dbReference type="SMR" id="A4J2F4"/>
<dbReference type="STRING" id="349161.Dred_0718"/>
<dbReference type="KEGG" id="drm:Dred_0718"/>
<dbReference type="eggNOG" id="COG0060">
    <property type="taxonomic scope" value="Bacteria"/>
</dbReference>
<dbReference type="HOGENOM" id="CLU_001493_7_0_9"/>
<dbReference type="OrthoDB" id="9810365at2"/>
<dbReference type="Proteomes" id="UP000001556">
    <property type="component" value="Chromosome"/>
</dbReference>
<dbReference type="GO" id="GO:0005829">
    <property type="term" value="C:cytosol"/>
    <property type="evidence" value="ECO:0007669"/>
    <property type="project" value="TreeGrafter"/>
</dbReference>
<dbReference type="GO" id="GO:0002161">
    <property type="term" value="F:aminoacyl-tRNA deacylase activity"/>
    <property type="evidence" value="ECO:0007669"/>
    <property type="project" value="InterPro"/>
</dbReference>
<dbReference type="GO" id="GO:0005524">
    <property type="term" value="F:ATP binding"/>
    <property type="evidence" value="ECO:0007669"/>
    <property type="project" value="UniProtKB-UniRule"/>
</dbReference>
<dbReference type="GO" id="GO:0004822">
    <property type="term" value="F:isoleucine-tRNA ligase activity"/>
    <property type="evidence" value="ECO:0007669"/>
    <property type="project" value="UniProtKB-UniRule"/>
</dbReference>
<dbReference type="GO" id="GO:0000049">
    <property type="term" value="F:tRNA binding"/>
    <property type="evidence" value="ECO:0007669"/>
    <property type="project" value="InterPro"/>
</dbReference>
<dbReference type="GO" id="GO:0008270">
    <property type="term" value="F:zinc ion binding"/>
    <property type="evidence" value="ECO:0007669"/>
    <property type="project" value="UniProtKB-UniRule"/>
</dbReference>
<dbReference type="GO" id="GO:0006428">
    <property type="term" value="P:isoleucyl-tRNA aminoacylation"/>
    <property type="evidence" value="ECO:0007669"/>
    <property type="project" value="UniProtKB-UniRule"/>
</dbReference>
<dbReference type="CDD" id="cd07960">
    <property type="entry name" value="Anticodon_Ia_Ile_BEm"/>
    <property type="match status" value="1"/>
</dbReference>
<dbReference type="CDD" id="cd00818">
    <property type="entry name" value="IleRS_core"/>
    <property type="match status" value="1"/>
</dbReference>
<dbReference type="FunFam" id="1.10.730.20:FF:000001">
    <property type="entry name" value="Isoleucine--tRNA ligase"/>
    <property type="match status" value="1"/>
</dbReference>
<dbReference type="FunFam" id="3.40.50.620:FF:000152">
    <property type="entry name" value="Isoleucine--tRNA ligase"/>
    <property type="match status" value="1"/>
</dbReference>
<dbReference type="FunFam" id="3.90.740.10:FF:000006">
    <property type="entry name" value="Isoleucine--tRNA ligase"/>
    <property type="match status" value="1"/>
</dbReference>
<dbReference type="Gene3D" id="1.10.730.20">
    <property type="match status" value="1"/>
</dbReference>
<dbReference type="Gene3D" id="2.170.220.10">
    <property type="match status" value="1"/>
</dbReference>
<dbReference type="Gene3D" id="3.40.50.620">
    <property type="entry name" value="HUPs"/>
    <property type="match status" value="2"/>
</dbReference>
<dbReference type="Gene3D" id="1.10.10.830">
    <property type="entry name" value="Ile-tRNA synthetase CP2 domain-like"/>
    <property type="match status" value="1"/>
</dbReference>
<dbReference type="Gene3D" id="3.90.740.10">
    <property type="entry name" value="Valyl/Leucyl/Isoleucyl-tRNA synthetase, editing domain"/>
    <property type="match status" value="1"/>
</dbReference>
<dbReference type="HAMAP" id="MF_02002">
    <property type="entry name" value="Ile_tRNA_synth_type1"/>
    <property type="match status" value="1"/>
</dbReference>
<dbReference type="InterPro" id="IPR001412">
    <property type="entry name" value="aa-tRNA-synth_I_CS"/>
</dbReference>
<dbReference type="InterPro" id="IPR002300">
    <property type="entry name" value="aa-tRNA-synth_Ia"/>
</dbReference>
<dbReference type="InterPro" id="IPR033708">
    <property type="entry name" value="Anticodon_Ile_BEm"/>
</dbReference>
<dbReference type="InterPro" id="IPR002301">
    <property type="entry name" value="Ile-tRNA-ligase"/>
</dbReference>
<dbReference type="InterPro" id="IPR023585">
    <property type="entry name" value="Ile-tRNA-ligase_type1"/>
</dbReference>
<dbReference type="InterPro" id="IPR050081">
    <property type="entry name" value="Ile-tRNA_ligase"/>
</dbReference>
<dbReference type="InterPro" id="IPR013155">
    <property type="entry name" value="M/V/L/I-tRNA-synth_anticd-bd"/>
</dbReference>
<dbReference type="InterPro" id="IPR014729">
    <property type="entry name" value="Rossmann-like_a/b/a_fold"/>
</dbReference>
<dbReference type="InterPro" id="IPR009080">
    <property type="entry name" value="tRNAsynth_Ia_anticodon-bd"/>
</dbReference>
<dbReference type="InterPro" id="IPR009008">
    <property type="entry name" value="Val/Leu/Ile-tRNA-synth_edit"/>
</dbReference>
<dbReference type="InterPro" id="IPR010663">
    <property type="entry name" value="Znf_FPG/IleRS"/>
</dbReference>
<dbReference type="NCBIfam" id="TIGR00392">
    <property type="entry name" value="ileS"/>
    <property type="match status" value="1"/>
</dbReference>
<dbReference type="PANTHER" id="PTHR42765:SF1">
    <property type="entry name" value="ISOLEUCINE--TRNA LIGASE, MITOCHONDRIAL"/>
    <property type="match status" value="1"/>
</dbReference>
<dbReference type="PANTHER" id="PTHR42765">
    <property type="entry name" value="SOLEUCYL-TRNA SYNTHETASE"/>
    <property type="match status" value="1"/>
</dbReference>
<dbReference type="Pfam" id="PF08264">
    <property type="entry name" value="Anticodon_1"/>
    <property type="match status" value="1"/>
</dbReference>
<dbReference type="Pfam" id="PF00133">
    <property type="entry name" value="tRNA-synt_1"/>
    <property type="match status" value="1"/>
</dbReference>
<dbReference type="Pfam" id="PF06827">
    <property type="entry name" value="zf-FPG_IleRS"/>
    <property type="match status" value="1"/>
</dbReference>
<dbReference type="PRINTS" id="PR00984">
    <property type="entry name" value="TRNASYNTHILE"/>
</dbReference>
<dbReference type="SUPFAM" id="SSF47323">
    <property type="entry name" value="Anticodon-binding domain of a subclass of class I aminoacyl-tRNA synthetases"/>
    <property type="match status" value="1"/>
</dbReference>
<dbReference type="SUPFAM" id="SSF52374">
    <property type="entry name" value="Nucleotidylyl transferase"/>
    <property type="match status" value="1"/>
</dbReference>
<dbReference type="SUPFAM" id="SSF50677">
    <property type="entry name" value="ValRS/IleRS/LeuRS editing domain"/>
    <property type="match status" value="1"/>
</dbReference>
<dbReference type="PROSITE" id="PS00178">
    <property type="entry name" value="AA_TRNA_LIGASE_I"/>
    <property type="match status" value="1"/>
</dbReference>
<feature type="chain" id="PRO_1000073708" description="Isoleucine--tRNA ligase">
    <location>
        <begin position="1"/>
        <end position="931"/>
    </location>
</feature>
<feature type="region of interest" description="Disordered" evidence="2">
    <location>
        <begin position="1"/>
        <end position="25"/>
    </location>
</feature>
<feature type="short sequence motif" description="'HIGH' region">
    <location>
        <begin position="57"/>
        <end position="67"/>
    </location>
</feature>
<feature type="short sequence motif" description="'KMSKS' region">
    <location>
        <begin position="600"/>
        <end position="604"/>
    </location>
</feature>
<feature type="compositionally biased region" description="Polar residues" evidence="2">
    <location>
        <begin position="1"/>
        <end position="14"/>
    </location>
</feature>
<feature type="binding site" evidence="1">
    <location>
        <position position="559"/>
    </location>
    <ligand>
        <name>L-isoleucyl-5'-AMP</name>
        <dbReference type="ChEBI" id="CHEBI:178002"/>
    </ligand>
</feature>
<feature type="binding site" evidence="1">
    <location>
        <position position="603"/>
    </location>
    <ligand>
        <name>ATP</name>
        <dbReference type="ChEBI" id="CHEBI:30616"/>
    </ligand>
</feature>
<feature type="binding site" evidence="1">
    <location>
        <position position="898"/>
    </location>
    <ligand>
        <name>Zn(2+)</name>
        <dbReference type="ChEBI" id="CHEBI:29105"/>
    </ligand>
</feature>
<feature type="binding site" evidence="1">
    <location>
        <position position="901"/>
    </location>
    <ligand>
        <name>Zn(2+)</name>
        <dbReference type="ChEBI" id="CHEBI:29105"/>
    </ligand>
</feature>
<feature type="binding site" evidence="1">
    <location>
        <position position="918"/>
    </location>
    <ligand>
        <name>Zn(2+)</name>
        <dbReference type="ChEBI" id="CHEBI:29105"/>
    </ligand>
</feature>
<feature type="binding site" evidence="1">
    <location>
        <position position="921"/>
    </location>
    <ligand>
        <name>Zn(2+)</name>
        <dbReference type="ChEBI" id="CHEBI:29105"/>
    </ligand>
</feature>
<evidence type="ECO:0000255" key="1">
    <source>
        <dbReference type="HAMAP-Rule" id="MF_02002"/>
    </source>
</evidence>
<evidence type="ECO:0000256" key="2">
    <source>
        <dbReference type="SAM" id="MobiDB-lite"/>
    </source>
</evidence>
<sequence>MDYSKTLNLPQTQFPMRGNLPQREPETQKYWQEIDLYKKVQEKNKGKTKFILHDGPPYANGHIHLGHTLNKVLKDIIVKYRSMSGYDAPYVPGWDTHGLPIEQQAIKQLGINRHQVNPVEFRAKCKDYALKWANTQSEEFQRLGVRGDWENPYYTLLPQYEATQIRVFGEMAKKGYIYKGLKPVYWCASCETALAEAEVEYADKTSPSIYVKFPVKDGKGVLPQDAAVVIWTTTPWTLPANVAISVHPEFEYVLAAVQNQKIVVAKELLESFKQAVGAEEAEILATYQGEQLERVVCQHPFIDERESLVILGEHVTLDAGTGAVHTAPGHGEEDFMVGKKYELPVLAPIDNRGRFTSEGGKFQGQFIMDANKTIIEELKERDALMGHVSIKHQYPHCWRCKQPIFFRATEQWFASVDGFRQEALQAIRNVKWVPSWGEDRIYNMVEGRGDWCVSRQRTWGVPIPIFYCNDCGKEIITEETISHIEKLFREHGSDIWFAKEANELVPASLTCPHCGKGKDFRKETDTMDVWFDSGSSHLAVLNQPELWPEQQRPADLYLEGSDQHRGWFNSSLSTSVAVTGKPPYKTVLTHGFTVDEKGRKMSKSLGNVVDPLKICSQMGADILRLWVSSADYRADLALSQNILKQMTESYRKIRNTARFLLGNLYDFDPVKDKVAYDKLPELDRVALMELHKLIKQVLAAYENYEFHIVYHAVHNYCVVDLSAFYLDIIKDRLYTAVPGSLERRAAQTVLYEALDALVRLLTPVLAFTTEEIYKYMPVVGDRLASVQMLDMPEVNVEYMDVELEKKWDKIHEIRKEVLKALEVARKNKVIGNALEAKVDLYVAGDVEEVLKPMAAELTTLFIVSKVNLHGLAAAPADAVKAEELELALQVATAEGGKCERCWMYHEEVGNDAEHATLCPRCATVVKEHHTA</sequence>
<keyword id="KW-0030">Aminoacyl-tRNA synthetase</keyword>
<keyword id="KW-0067">ATP-binding</keyword>
<keyword id="KW-0963">Cytoplasm</keyword>
<keyword id="KW-0436">Ligase</keyword>
<keyword id="KW-0479">Metal-binding</keyword>
<keyword id="KW-0547">Nucleotide-binding</keyword>
<keyword id="KW-0648">Protein biosynthesis</keyword>
<keyword id="KW-1185">Reference proteome</keyword>
<keyword id="KW-0862">Zinc</keyword>
<comment type="function">
    <text evidence="1">Catalyzes the attachment of isoleucine to tRNA(Ile). As IleRS can inadvertently accommodate and process structurally similar amino acids such as valine, to avoid such errors it has two additional distinct tRNA(Ile)-dependent editing activities. One activity is designated as 'pretransfer' editing and involves the hydrolysis of activated Val-AMP. The other activity is designated 'posttransfer' editing and involves deacylation of mischarged Val-tRNA(Ile).</text>
</comment>
<comment type="catalytic activity">
    <reaction evidence="1">
        <text>tRNA(Ile) + L-isoleucine + ATP = L-isoleucyl-tRNA(Ile) + AMP + diphosphate</text>
        <dbReference type="Rhea" id="RHEA:11060"/>
        <dbReference type="Rhea" id="RHEA-COMP:9666"/>
        <dbReference type="Rhea" id="RHEA-COMP:9695"/>
        <dbReference type="ChEBI" id="CHEBI:30616"/>
        <dbReference type="ChEBI" id="CHEBI:33019"/>
        <dbReference type="ChEBI" id="CHEBI:58045"/>
        <dbReference type="ChEBI" id="CHEBI:78442"/>
        <dbReference type="ChEBI" id="CHEBI:78528"/>
        <dbReference type="ChEBI" id="CHEBI:456215"/>
        <dbReference type="EC" id="6.1.1.5"/>
    </reaction>
</comment>
<comment type="cofactor">
    <cofactor evidence="1">
        <name>Zn(2+)</name>
        <dbReference type="ChEBI" id="CHEBI:29105"/>
    </cofactor>
    <text evidence="1">Binds 1 zinc ion per subunit.</text>
</comment>
<comment type="subunit">
    <text evidence="1">Monomer.</text>
</comment>
<comment type="subcellular location">
    <subcellularLocation>
        <location evidence="1">Cytoplasm</location>
    </subcellularLocation>
</comment>
<comment type="domain">
    <text evidence="1">IleRS has two distinct active sites: one for aminoacylation and one for editing. The misactivated valine is translocated from the active site to the editing site, which sterically excludes the correctly activated isoleucine. The single editing site contains two valyl binding pockets, one specific for each substrate (Val-AMP or Val-tRNA(Ile)).</text>
</comment>
<comment type="similarity">
    <text evidence="1">Belongs to the class-I aminoacyl-tRNA synthetase family. IleS type 1 subfamily.</text>
</comment>
<proteinExistence type="inferred from homology"/>
<organism>
    <name type="scientific">Desulforamulus reducens (strain ATCC BAA-1160 / DSM 100696 / MI-1)</name>
    <name type="common">Desulfotomaculum reducens</name>
    <dbReference type="NCBI Taxonomy" id="349161"/>
    <lineage>
        <taxon>Bacteria</taxon>
        <taxon>Bacillati</taxon>
        <taxon>Bacillota</taxon>
        <taxon>Clostridia</taxon>
        <taxon>Eubacteriales</taxon>
        <taxon>Peptococcaceae</taxon>
        <taxon>Desulforamulus</taxon>
    </lineage>
</organism>
<reference key="1">
    <citation type="submission" date="2007-03" db="EMBL/GenBank/DDBJ databases">
        <title>Complete sequence of Desulfotomaculum reducens MI-1.</title>
        <authorList>
            <consortium name="US DOE Joint Genome Institute"/>
            <person name="Copeland A."/>
            <person name="Lucas S."/>
            <person name="Lapidus A."/>
            <person name="Barry K."/>
            <person name="Detter J.C."/>
            <person name="Glavina del Rio T."/>
            <person name="Hammon N."/>
            <person name="Israni S."/>
            <person name="Dalin E."/>
            <person name="Tice H."/>
            <person name="Pitluck S."/>
            <person name="Sims D."/>
            <person name="Brettin T."/>
            <person name="Bruce D."/>
            <person name="Han C."/>
            <person name="Tapia R."/>
            <person name="Schmutz J."/>
            <person name="Larimer F."/>
            <person name="Land M."/>
            <person name="Hauser L."/>
            <person name="Kyrpides N."/>
            <person name="Kim E."/>
            <person name="Tebo B.M."/>
            <person name="Richardson P."/>
        </authorList>
    </citation>
    <scope>NUCLEOTIDE SEQUENCE [LARGE SCALE GENOMIC DNA]</scope>
    <source>
        <strain>ATCC BAA-1160 / DSM 100696 / MI-1</strain>
    </source>
</reference>
<name>SYI_DESRM</name>